<keyword id="KW-1003">Cell membrane</keyword>
<keyword id="KW-0966">Cell projection</keyword>
<keyword id="KW-1186">Ciliopathy</keyword>
<keyword id="KW-0969">Cilium</keyword>
<keyword id="KW-0970">Cilium biogenesis/degradation</keyword>
<keyword id="KW-0325">Glycoprotein</keyword>
<keyword id="KW-0472">Membrane</keyword>
<keyword id="KW-1267">Proteomics identification</keyword>
<keyword id="KW-1185">Reference proteome</keyword>
<keyword id="KW-0812">Transmembrane</keyword>
<keyword id="KW-1133">Transmembrane helix</keyword>
<protein>
    <recommendedName>
        <fullName>Transmembrane protein 17</fullName>
    </recommendedName>
</protein>
<sequence>MELPDPVRQRLGNFSRAVFSDSNRTGPESNEGPENEMVSSLALQMSLYFNTYYFPLWWVSSIMMLHMKYSILPDYYKFIVITVIILITLIEAIRLYLGYVGNLQEKVPELAGFWLLSLLLQLPLILFLLFNEGLTNLPLEKAIHIIFTLFLAFQVVAAFLTLRKMVNQLAVRFHLQDFDRLSANRGDMRRMRSCIEEI</sequence>
<accession>Q86X19</accession>
<accession>Q53QP7</accession>
<accession>Q53R98</accession>
<comment type="function">
    <text evidence="1">Transmembrane component of the tectonic-like complex, a complex localized at the transition zone of primary cilia and acting as a barrier that prevents diffusion of transmembrane proteins between the cilia and plasma membranes. Required for ciliogenesis and sonic hedgehog/SHH signaling (By similarity).</text>
</comment>
<comment type="subunit">
    <text evidence="1">Part of the tectonic-like complex (also named B9 complex).</text>
</comment>
<comment type="interaction">
    <interactant intactId="EBI-11343485">
        <id>Q86X19</id>
    </interactant>
    <interactant intactId="EBI-2339219">
        <id>Q08426</id>
        <label>EHHADH</label>
    </interactant>
    <organismsDiffer>false</organismsDiffer>
    <experiments>3</experiments>
</comment>
<comment type="interaction">
    <interactant intactId="EBI-11343485">
        <id>Q86X19</id>
    </interactant>
    <interactant intactId="EBI-727004">
        <id>O00560</id>
        <label>SDCBP</label>
    </interactant>
    <organismsDiffer>false</organismsDiffer>
    <experiments>3</experiments>
</comment>
<comment type="interaction">
    <interactant intactId="EBI-11343485">
        <id>Q86X19</id>
    </interactant>
    <interactant intactId="EBI-10962400">
        <id>Q9UHA2</id>
        <label>SS18L2</label>
    </interactant>
    <organismsDiffer>false</organismsDiffer>
    <experiments>3</experiments>
</comment>
<comment type="interaction">
    <interactant intactId="EBI-11343485">
        <id>Q86X19</id>
    </interactant>
    <interactant intactId="EBI-2799703">
        <id>O95070</id>
        <label>YIF1A</label>
    </interactant>
    <organismsDiffer>false</organismsDiffer>
    <experiments>4</experiments>
</comment>
<comment type="subcellular location">
    <subcellularLocation>
        <location evidence="1">Cell projection</location>
        <location evidence="1">Cilium membrane</location>
        <topology evidence="1">Multi-pass membrane protein</topology>
    </subcellularLocation>
    <text evidence="1">Localizes to the transition zone of primary cilia.</text>
</comment>
<comment type="similarity">
    <text evidence="5">Belongs to the TMEM17 family.</text>
</comment>
<dbReference type="EMBL" id="AC093159">
    <property type="protein sequence ID" value="AAY24170.1"/>
    <property type="molecule type" value="Genomic_DNA"/>
</dbReference>
<dbReference type="EMBL" id="AC107083">
    <property type="protein sequence ID" value="AAY24048.1"/>
    <property type="molecule type" value="Genomic_DNA"/>
</dbReference>
<dbReference type="EMBL" id="BC047439">
    <property type="protein sequence ID" value="AAH47439.1"/>
    <property type="molecule type" value="mRNA"/>
</dbReference>
<dbReference type="CCDS" id="CCDS1871.1"/>
<dbReference type="RefSeq" id="NP_938017.2">
    <property type="nucleotide sequence ID" value="NM_198276.3"/>
</dbReference>
<dbReference type="BioGRID" id="128342">
    <property type="interactions" value="404"/>
</dbReference>
<dbReference type="ComplexPortal" id="CPX-2531">
    <property type="entry name" value="MKS transition zone complex"/>
</dbReference>
<dbReference type="FunCoup" id="Q86X19">
    <property type="interactions" value="96"/>
</dbReference>
<dbReference type="IntAct" id="Q86X19">
    <property type="interactions" value="403"/>
</dbReference>
<dbReference type="STRING" id="9606.ENSP00000335094"/>
<dbReference type="MoonDB" id="Q86X19">
    <property type="type" value="Predicted"/>
</dbReference>
<dbReference type="TCDB" id="9.B.204.1.1">
    <property type="family name" value="the 4 tms ciliary biogenesis tmem17 (tmem17) family"/>
</dbReference>
<dbReference type="GlyCosmos" id="Q86X19">
    <property type="glycosylation" value="3 sites, 2 glycans"/>
</dbReference>
<dbReference type="GlyGen" id="Q86X19">
    <property type="glycosylation" value="3 sites, 1 N-linked glycan (1 site), 2 O-linked glycans (1 site)"/>
</dbReference>
<dbReference type="iPTMnet" id="Q86X19"/>
<dbReference type="PhosphoSitePlus" id="Q86X19"/>
<dbReference type="BioMuta" id="TMEM17"/>
<dbReference type="DMDM" id="117949799"/>
<dbReference type="MassIVE" id="Q86X19"/>
<dbReference type="PaxDb" id="9606-ENSP00000335094"/>
<dbReference type="PeptideAtlas" id="Q86X19"/>
<dbReference type="ProteomicsDB" id="70222"/>
<dbReference type="Antibodypedia" id="15953">
    <property type="antibodies" value="57 antibodies from 12 providers"/>
</dbReference>
<dbReference type="DNASU" id="200728"/>
<dbReference type="Ensembl" id="ENST00000335390.6">
    <property type="protein sequence ID" value="ENSP00000335094.5"/>
    <property type="gene ID" value="ENSG00000186889.10"/>
</dbReference>
<dbReference type="GeneID" id="200728"/>
<dbReference type="KEGG" id="hsa:200728"/>
<dbReference type="MANE-Select" id="ENST00000335390.6">
    <property type="protein sequence ID" value="ENSP00000335094.5"/>
    <property type="RefSeq nucleotide sequence ID" value="NM_198276.3"/>
    <property type="RefSeq protein sequence ID" value="NP_938017.2"/>
</dbReference>
<dbReference type="UCSC" id="uc002sbt.3">
    <property type="organism name" value="human"/>
</dbReference>
<dbReference type="AGR" id="HGNC:26623"/>
<dbReference type="CTD" id="200728"/>
<dbReference type="DisGeNET" id="200728"/>
<dbReference type="GeneCards" id="TMEM17"/>
<dbReference type="HGNC" id="HGNC:26623">
    <property type="gene designation" value="TMEM17"/>
</dbReference>
<dbReference type="HPA" id="ENSG00000186889">
    <property type="expression patterns" value="Low tissue specificity"/>
</dbReference>
<dbReference type="MIM" id="614950">
    <property type="type" value="gene"/>
</dbReference>
<dbReference type="neXtProt" id="NX_Q86X19"/>
<dbReference type="OpenTargets" id="ENSG00000186889"/>
<dbReference type="PharmGKB" id="PA134962933"/>
<dbReference type="VEuPathDB" id="HostDB:ENSG00000186889"/>
<dbReference type="eggNOG" id="KOG4694">
    <property type="taxonomic scope" value="Eukaryota"/>
</dbReference>
<dbReference type="GeneTree" id="ENSGT00940000153899"/>
<dbReference type="HOGENOM" id="CLU_092836_0_0_1"/>
<dbReference type="InParanoid" id="Q86X19"/>
<dbReference type="OMA" id="LWWVSCI"/>
<dbReference type="OrthoDB" id="311720at2759"/>
<dbReference type="PAN-GO" id="Q86X19">
    <property type="GO annotations" value="2 GO annotations based on evolutionary models"/>
</dbReference>
<dbReference type="PhylomeDB" id="Q86X19"/>
<dbReference type="TreeFam" id="TF323824"/>
<dbReference type="PathwayCommons" id="Q86X19"/>
<dbReference type="SignaLink" id="Q86X19"/>
<dbReference type="BioGRID-ORCS" id="200728">
    <property type="hits" value="6 hits in 1149 CRISPR screens"/>
</dbReference>
<dbReference type="GenomeRNAi" id="200728"/>
<dbReference type="Pharos" id="Q86X19">
    <property type="development level" value="Tbio"/>
</dbReference>
<dbReference type="PRO" id="PR:Q86X19"/>
<dbReference type="Proteomes" id="UP000005640">
    <property type="component" value="Chromosome 2"/>
</dbReference>
<dbReference type="RNAct" id="Q86X19">
    <property type="molecule type" value="protein"/>
</dbReference>
<dbReference type="Bgee" id="ENSG00000186889">
    <property type="expression patterns" value="Expressed in buccal mucosa cell and 156 other cell types or tissues"/>
</dbReference>
<dbReference type="GO" id="GO:0060170">
    <property type="term" value="C:ciliary membrane"/>
    <property type="evidence" value="ECO:0000250"/>
    <property type="project" value="UniProtKB"/>
</dbReference>
<dbReference type="GO" id="GO:0035869">
    <property type="term" value="C:ciliary transition zone"/>
    <property type="evidence" value="ECO:0000250"/>
    <property type="project" value="UniProtKB"/>
</dbReference>
<dbReference type="GO" id="GO:0036038">
    <property type="term" value="C:MKS complex"/>
    <property type="evidence" value="ECO:0000250"/>
    <property type="project" value="UniProtKB"/>
</dbReference>
<dbReference type="GO" id="GO:0060271">
    <property type="term" value="P:cilium assembly"/>
    <property type="evidence" value="ECO:0000250"/>
    <property type="project" value="UniProtKB"/>
</dbReference>
<dbReference type="GO" id="GO:1905515">
    <property type="term" value="P:non-motile cilium assembly"/>
    <property type="evidence" value="ECO:0000315"/>
    <property type="project" value="WormBase"/>
</dbReference>
<dbReference type="GO" id="GO:0007224">
    <property type="term" value="P:smoothened signaling pathway"/>
    <property type="evidence" value="ECO:0000250"/>
    <property type="project" value="UniProtKB"/>
</dbReference>
<dbReference type="InterPro" id="IPR019184">
    <property type="entry name" value="Uncharacterised_TM-17"/>
</dbReference>
<dbReference type="PANTHER" id="PTHR13531">
    <property type="entry name" value="GEO07735P1-RELATED-RELATED"/>
    <property type="match status" value="1"/>
</dbReference>
<dbReference type="PANTHER" id="PTHR13531:SF14">
    <property type="entry name" value="TRANSMEMBRANE PROTEIN 17"/>
    <property type="match status" value="1"/>
</dbReference>
<dbReference type="Pfam" id="PF09799">
    <property type="entry name" value="Transmemb_17"/>
    <property type="match status" value="1"/>
</dbReference>
<organism>
    <name type="scientific">Homo sapiens</name>
    <name type="common">Human</name>
    <dbReference type="NCBI Taxonomy" id="9606"/>
    <lineage>
        <taxon>Eukaryota</taxon>
        <taxon>Metazoa</taxon>
        <taxon>Chordata</taxon>
        <taxon>Craniata</taxon>
        <taxon>Vertebrata</taxon>
        <taxon>Euteleostomi</taxon>
        <taxon>Mammalia</taxon>
        <taxon>Eutheria</taxon>
        <taxon>Euarchontoglires</taxon>
        <taxon>Primates</taxon>
        <taxon>Haplorrhini</taxon>
        <taxon>Catarrhini</taxon>
        <taxon>Hominidae</taxon>
        <taxon>Homo</taxon>
    </lineage>
</organism>
<name>TMM17_HUMAN</name>
<feature type="chain" id="PRO_0000255260" description="Transmembrane protein 17">
    <location>
        <begin position="1"/>
        <end position="198"/>
    </location>
</feature>
<feature type="transmembrane region" description="Helical" evidence="2">
    <location>
        <begin position="45"/>
        <end position="65"/>
    </location>
</feature>
<feature type="transmembrane region" description="Helical" evidence="2">
    <location>
        <begin position="78"/>
        <end position="98"/>
    </location>
</feature>
<feature type="transmembrane region" description="Helical" evidence="2">
    <location>
        <begin position="110"/>
        <end position="130"/>
    </location>
</feature>
<feature type="transmembrane region" description="Helical" evidence="2">
    <location>
        <begin position="142"/>
        <end position="162"/>
    </location>
</feature>
<feature type="glycosylation site" description="N-linked (GlcNAc...) asparagine" evidence="2">
    <location>
        <position position="13"/>
    </location>
</feature>
<feature type="glycosylation site" description="N-linked (GlcNAc...) asparagine" evidence="2">
    <location>
        <position position="23"/>
    </location>
</feature>
<feature type="sequence variant" id="VAR_028864" description="In dbSNP:rs17854454." evidence="3">
    <original>G</original>
    <variation>S</variation>
    <location>
        <position position="26"/>
    </location>
</feature>
<feature type="sequence variant" id="VAR_075897" description="Found in a family diagnosed with orofaciodigital syndrome; uncertain significance; reduced cilia formation in patient fibroblasts compared to control; dbSNP:rs201339749." evidence="4">
    <original>N</original>
    <variation>K</variation>
    <location>
        <position position="102"/>
    </location>
</feature>
<proteinExistence type="evidence at protein level"/>
<gene>
    <name type="primary">TMEM17</name>
</gene>
<reference key="1">
    <citation type="journal article" date="2005" name="Nature">
        <title>Generation and annotation of the DNA sequences of human chromosomes 2 and 4.</title>
        <authorList>
            <person name="Hillier L.W."/>
            <person name="Graves T.A."/>
            <person name="Fulton R.S."/>
            <person name="Fulton L.A."/>
            <person name="Pepin K.H."/>
            <person name="Minx P."/>
            <person name="Wagner-McPherson C."/>
            <person name="Layman D."/>
            <person name="Wylie K."/>
            <person name="Sekhon M."/>
            <person name="Becker M.C."/>
            <person name="Fewell G.A."/>
            <person name="Delehaunty K.D."/>
            <person name="Miner T.L."/>
            <person name="Nash W.E."/>
            <person name="Kremitzki C."/>
            <person name="Oddy L."/>
            <person name="Du H."/>
            <person name="Sun H."/>
            <person name="Bradshaw-Cordum H."/>
            <person name="Ali J."/>
            <person name="Carter J."/>
            <person name="Cordes M."/>
            <person name="Harris A."/>
            <person name="Isak A."/>
            <person name="van Brunt A."/>
            <person name="Nguyen C."/>
            <person name="Du F."/>
            <person name="Courtney L."/>
            <person name="Kalicki J."/>
            <person name="Ozersky P."/>
            <person name="Abbott S."/>
            <person name="Armstrong J."/>
            <person name="Belter E.A."/>
            <person name="Caruso L."/>
            <person name="Cedroni M."/>
            <person name="Cotton M."/>
            <person name="Davidson T."/>
            <person name="Desai A."/>
            <person name="Elliott G."/>
            <person name="Erb T."/>
            <person name="Fronick C."/>
            <person name="Gaige T."/>
            <person name="Haakenson W."/>
            <person name="Haglund K."/>
            <person name="Holmes A."/>
            <person name="Harkins R."/>
            <person name="Kim K."/>
            <person name="Kruchowski S.S."/>
            <person name="Strong C.M."/>
            <person name="Grewal N."/>
            <person name="Goyea E."/>
            <person name="Hou S."/>
            <person name="Levy A."/>
            <person name="Martinka S."/>
            <person name="Mead K."/>
            <person name="McLellan M.D."/>
            <person name="Meyer R."/>
            <person name="Randall-Maher J."/>
            <person name="Tomlinson C."/>
            <person name="Dauphin-Kohlberg S."/>
            <person name="Kozlowicz-Reilly A."/>
            <person name="Shah N."/>
            <person name="Swearengen-Shahid S."/>
            <person name="Snider J."/>
            <person name="Strong J.T."/>
            <person name="Thompson J."/>
            <person name="Yoakum M."/>
            <person name="Leonard S."/>
            <person name="Pearman C."/>
            <person name="Trani L."/>
            <person name="Radionenko M."/>
            <person name="Waligorski J.E."/>
            <person name="Wang C."/>
            <person name="Rock S.M."/>
            <person name="Tin-Wollam A.-M."/>
            <person name="Maupin R."/>
            <person name="Latreille P."/>
            <person name="Wendl M.C."/>
            <person name="Yang S.-P."/>
            <person name="Pohl C."/>
            <person name="Wallis J.W."/>
            <person name="Spieth J."/>
            <person name="Bieri T.A."/>
            <person name="Berkowicz N."/>
            <person name="Nelson J.O."/>
            <person name="Osborne J."/>
            <person name="Ding L."/>
            <person name="Meyer R."/>
            <person name="Sabo A."/>
            <person name="Shotland Y."/>
            <person name="Sinha P."/>
            <person name="Wohldmann P.E."/>
            <person name="Cook L.L."/>
            <person name="Hickenbotham M.T."/>
            <person name="Eldred J."/>
            <person name="Williams D."/>
            <person name="Jones T.A."/>
            <person name="She X."/>
            <person name="Ciccarelli F.D."/>
            <person name="Izaurralde E."/>
            <person name="Taylor J."/>
            <person name="Schmutz J."/>
            <person name="Myers R.M."/>
            <person name="Cox D.R."/>
            <person name="Huang X."/>
            <person name="McPherson J.D."/>
            <person name="Mardis E.R."/>
            <person name="Clifton S.W."/>
            <person name="Warren W.C."/>
            <person name="Chinwalla A.T."/>
            <person name="Eddy S.R."/>
            <person name="Marra M.A."/>
            <person name="Ovcharenko I."/>
            <person name="Furey T.S."/>
            <person name="Miller W."/>
            <person name="Eichler E.E."/>
            <person name="Bork P."/>
            <person name="Suyama M."/>
            <person name="Torrents D."/>
            <person name="Waterston R.H."/>
            <person name="Wilson R.K."/>
        </authorList>
    </citation>
    <scope>NUCLEOTIDE SEQUENCE [LARGE SCALE GENOMIC DNA]</scope>
</reference>
<reference key="2">
    <citation type="journal article" date="2004" name="Genome Res.">
        <title>The status, quality, and expansion of the NIH full-length cDNA project: the Mammalian Gene Collection (MGC).</title>
        <authorList>
            <consortium name="The MGC Project Team"/>
        </authorList>
    </citation>
    <scope>NUCLEOTIDE SEQUENCE [LARGE SCALE MRNA]</scope>
    <scope>VARIANT SER-26</scope>
    <source>
        <tissue>Hypothalamus</tissue>
    </source>
</reference>
<reference key="3">
    <citation type="journal article" date="2016" name="PLoS Biol.">
        <title>MKS5 and CEP290 dependent assembly pathway of the ciliary transition zone.</title>
        <authorList>
            <person name="Li C."/>
            <person name="Jensen V.L."/>
            <person name="Park K."/>
            <person name="Kennedy J."/>
            <person name="Garcia-Gonzalo F.R."/>
            <person name="Romani M."/>
            <person name="De Mori R."/>
            <person name="Bruel A.L."/>
            <person name="Gaillard D."/>
            <person name="Doray B."/>
            <person name="Lopez E."/>
            <person name="Riviere J.B."/>
            <person name="Faivre L."/>
            <person name="Thauvin-Robinet C."/>
            <person name="Reiter J.F."/>
            <person name="Blacque O.E."/>
            <person name="Valente E.M."/>
            <person name="Leroux M.R."/>
        </authorList>
    </citation>
    <scope>VARIANT LYS-102</scope>
    <scope>CHARACTERIZATION OF VARIANT LYS-102</scope>
</reference>
<evidence type="ECO:0000250" key="1"/>
<evidence type="ECO:0000255" key="2"/>
<evidence type="ECO:0000269" key="3">
    <source>
    </source>
</evidence>
<evidence type="ECO:0000269" key="4">
    <source>
    </source>
</evidence>
<evidence type="ECO:0000305" key="5"/>